<evidence type="ECO:0000250" key="1"/>
<evidence type="ECO:0000303" key="2">
    <source>
    </source>
</evidence>
<evidence type="ECO:0000305" key="3"/>
<comment type="subunit">
    <text evidence="1">Part of the 50S ribosomal subunit.</text>
</comment>
<comment type="subcellular location">
    <subcellularLocation>
        <location>Plastid</location>
        <location>Chloroplast</location>
    </subcellularLocation>
</comment>
<comment type="similarity">
    <text evidence="3">Belongs to the universal ribosomal protein uL13 family.</text>
</comment>
<sequence>MAVLCSSSTVILSSSSVKSSGSERKSPFLGFSLTAISKPSVRVGIYANSKRGLQVKCEAEPTTTTSLVPANQRWMFDEEEANGPDIWNTTWYPKASDHVNTDKPWFVVDATDKILGRLASTIANHIRGKNLASYTPSVDMGAFVIVVNAEKVAVSGKKRNQKLYRRHSGRPGGMTVETFDQLQQRIPERIVEHAVRGMLPKGRLGRALFNHLKVYKGPDHPHEAQKPLDLPIRDKRIQLQK</sequence>
<gene>
    <name type="primary">RPL13</name>
    <name type="synonym">EMB1473</name>
    <name type="ordered locus">At1g78630</name>
    <name type="ORF">T30F21.4</name>
</gene>
<reference key="1">
    <citation type="submission" date="1995-05" db="EMBL/GenBank/DDBJ databases">
        <title>Three introns are added at the organelle to nucleus of the gene for chloroplast ribosomal protein L13.</title>
        <authorList>
            <person name="Kavousi M."/>
            <person name="Subramanian A.R."/>
        </authorList>
    </citation>
    <scope>NUCLEOTIDE SEQUENCE [GENOMIC DNA]</scope>
    <source>
        <strain>cv. Landsberg erecta</strain>
    </source>
</reference>
<reference key="2">
    <citation type="journal article" date="2000" name="Nature">
        <title>Sequence and analysis of chromosome 1 of the plant Arabidopsis thaliana.</title>
        <authorList>
            <person name="Theologis A."/>
            <person name="Ecker J.R."/>
            <person name="Palm C.J."/>
            <person name="Federspiel N.A."/>
            <person name="Kaul S."/>
            <person name="White O."/>
            <person name="Alonso J."/>
            <person name="Altafi H."/>
            <person name="Araujo R."/>
            <person name="Bowman C.L."/>
            <person name="Brooks S.Y."/>
            <person name="Buehler E."/>
            <person name="Chan A."/>
            <person name="Chao Q."/>
            <person name="Chen H."/>
            <person name="Cheuk R.F."/>
            <person name="Chin C.W."/>
            <person name="Chung M.K."/>
            <person name="Conn L."/>
            <person name="Conway A.B."/>
            <person name="Conway A.R."/>
            <person name="Creasy T.H."/>
            <person name="Dewar K."/>
            <person name="Dunn P."/>
            <person name="Etgu P."/>
            <person name="Feldblyum T.V."/>
            <person name="Feng J.-D."/>
            <person name="Fong B."/>
            <person name="Fujii C.Y."/>
            <person name="Gill J.E."/>
            <person name="Goldsmith A.D."/>
            <person name="Haas B."/>
            <person name="Hansen N.F."/>
            <person name="Hughes B."/>
            <person name="Huizar L."/>
            <person name="Hunter J.L."/>
            <person name="Jenkins J."/>
            <person name="Johnson-Hopson C."/>
            <person name="Khan S."/>
            <person name="Khaykin E."/>
            <person name="Kim C.J."/>
            <person name="Koo H.L."/>
            <person name="Kremenetskaia I."/>
            <person name="Kurtz D.B."/>
            <person name="Kwan A."/>
            <person name="Lam B."/>
            <person name="Langin-Hooper S."/>
            <person name="Lee A."/>
            <person name="Lee J.M."/>
            <person name="Lenz C.A."/>
            <person name="Li J.H."/>
            <person name="Li Y.-P."/>
            <person name="Lin X."/>
            <person name="Liu S.X."/>
            <person name="Liu Z.A."/>
            <person name="Luros J.S."/>
            <person name="Maiti R."/>
            <person name="Marziali A."/>
            <person name="Militscher J."/>
            <person name="Miranda M."/>
            <person name="Nguyen M."/>
            <person name="Nierman W.C."/>
            <person name="Osborne B.I."/>
            <person name="Pai G."/>
            <person name="Peterson J."/>
            <person name="Pham P.K."/>
            <person name="Rizzo M."/>
            <person name="Rooney T."/>
            <person name="Rowley D."/>
            <person name="Sakano H."/>
            <person name="Salzberg S.L."/>
            <person name="Schwartz J.R."/>
            <person name="Shinn P."/>
            <person name="Southwick A.M."/>
            <person name="Sun H."/>
            <person name="Tallon L.J."/>
            <person name="Tambunga G."/>
            <person name="Toriumi M.J."/>
            <person name="Town C.D."/>
            <person name="Utterback T."/>
            <person name="Van Aken S."/>
            <person name="Vaysberg M."/>
            <person name="Vysotskaia V.S."/>
            <person name="Walker M."/>
            <person name="Wu D."/>
            <person name="Yu G."/>
            <person name="Fraser C.M."/>
            <person name="Venter J.C."/>
            <person name="Davis R.W."/>
        </authorList>
    </citation>
    <scope>NUCLEOTIDE SEQUENCE [LARGE SCALE GENOMIC DNA]</scope>
    <source>
        <strain>cv. Columbia</strain>
    </source>
</reference>
<reference key="3">
    <citation type="journal article" date="2017" name="Plant J.">
        <title>Araport11: a complete reannotation of the Arabidopsis thaliana reference genome.</title>
        <authorList>
            <person name="Cheng C.Y."/>
            <person name="Krishnakumar V."/>
            <person name="Chan A.P."/>
            <person name="Thibaud-Nissen F."/>
            <person name="Schobel S."/>
            <person name="Town C.D."/>
        </authorList>
    </citation>
    <scope>GENOME REANNOTATION</scope>
    <source>
        <strain>cv. Columbia</strain>
    </source>
</reference>
<reference key="4">
    <citation type="journal article" date="2003" name="Science">
        <title>Empirical analysis of transcriptional activity in the Arabidopsis genome.</title>
        <authorList>
            <person name="Yamada K."/>
            <person name="Lim J."/>
            <person name="Dale J.M."/>
            <person name="Chen H."/>
            <person name="Shinn P."/>
            <person name="Palm C.J."/>
            <person name="Southwick A.M."/>
            <person name="Wu H.C."/>
            <person name="Kim C.J."/>
            <person name="Nguyen M."/>
            <person name="Pham P.K."/>
            <person name="Cheuk R.F."/>
            <person name="Karlin-Newmann G."/>
            <person name="Liu S.X."/>
            <person name="Lam B."/>
            <person name="Sakano H."/>
            <person name="Wu T."/>
            <person name="Yu G."/>
            <person name="Miranda M."/>
            <person name="Quach H.L."/>
            <person name="Tripp M."/>
            <person name="Chang C.H."/>
            <person name="Lee J.M."/>
            <person name="Toriumi M.J."/>
            <person name="Chan M.M."/>
            <person name="Tang C.C."/>
            <person name="Onodera C.S."/>
            <person name="Deng J.M."/>
            <person name="Akiyama K."/>
            <person name="Ansari Y."/>
            <person name="Arakawa T."/>
            <person name="Banh J."/>
            <person name="Banno F."/>
            <person name="Bowser L."/>
            <person name="Brooks S.Y."/>
            <person name="Carninci P."/>
            <person name="Chao Q."/>
            <person name="Choy N."/>
            <person name="Enju A."/>
            <person name="Goldsmith A.D."/>
            <person name="Gurjal M."/>
            <person name="Hansen N.F."/>
            <person name="Hayashizaki Y."/>
            <person name="Johnson-Hopson C."/>
            <person name="Hsuan V.W."/>
            <person name="Iida K."/>
            <person name="Karnes M."/>
            <person name="Khan S."/>
            <person name="Koesema E."/>
            <person name="Ishida J."/>
            <person name="Jiang P.X."/>
            <person name="Jones T."/>
            <person name="Kawai J."/>
            <person name="Kamiya A."/>
            <person name="Meyers C."/>
            <person name="Nakajima M."/>
            <person name="Narusaka M."/>
            <person name="Seki M."/>
            <person name="Sakurai T."/>
            <person name="Satou M."/>
            <person name="Tamse R."/>
            <person name="Vaysberg M."/>
            <person name="Wallender E.K."/>
            <person name="Wong C."/>
            <person name="Yamamura Y."/>
            <person name="Yuan S."/>
            <person name="Shinozaki K."/>
            <person name="Davis R.W."/>
            <person name="Theologis A."/>
            <person name="Ecker J.R."/>
        </authorList>
    </citation>
    <scope>NUCLEOTIDE SEQUENCE [LARGE SCALE MRNA]</scope>
    <source>
        <strain>cv. Columbia</strain>
    </source>
</reference>
<reference key="5">
    <citation type="journal article" date="2023" name="Plant Cell">
        <title>An updated nomenclature for plant ribosomal protein genes.</title>
        <authorList>
            <person name="Scarpin M.R."/>
            <person name="Busche M."/>
            <person name="Martinez R.E."/>
            <person name="Harper L.C."/>
            <person name="Reiser L."/>
            <person name="Szakonyi D."/>
            <person name="Merchante C."/>
            <person name="Lan T."/>
            <person name="Xiong W."/>
            <person name="Mo B."/>
            <person name="Tang G."/>
            <person name="Chen X."/>
            <person name="Bailey-Serres J."/>
            <person name="Browning K.S."/>
            <person name="Brunkard J.O."/>
        </authorList>
    </citation>
    <scope>NOMENCLATURE</scope>
</reference>
<protein>
    <recommendedName>
        <fullName evidence="2">Large ribosomal subunit protein uL13c</fullName>
    </recommendedName>
    <alternativeName>
        <fullName>50S ribosomal protein L13, chloroplastic</fullName>
    </alternativeName>
    <alternativeName>
        <fullName>CL13</fullName>
    </alternativeName>
    <alternativeName>
        <fullName>Protein EMBRYO DEFECTIVE 1473</fullName>
    </alternativeName>
</protein>
<feature type="transit peptide" description="Chloroplast" evidence="1">
    <location>
        <begin position="1"/>
        <end position="50"/>
    </location>
</feature>
<feature type="chain" id="PRO_0000249881" description="Large ribosomal subunit protein uL13c">
    <location>
        <begin position="51"/>
        <end position="241"/>
    </location>
</feature>
<organism>
    <name type="scientific">Arabidopsis thaliana</name>
    <name type="common">Mouse-ear cress</name>
    <dbReference type="NCBI Taxonomy" id="3702"/>
    <lineage>
        <taxon>Eukaryota</taxon>
        <taxon>Viridiplantae</taxon>
        <taxon>Streptophyta</taxon>
        <taxon>Embryophyta</taxon>
        <taxon>Tracheophyta</taxon>
        <taxon>Spermatophyta</taxon>
        <taxon>Magnoliopsida</taxon>
        <taxon>eudicotyledons</taxon>
        <taxon>Gunneridae</taxon>
        <taxon>Pentapetalae</taxon>
        <taxon>rosids</taxon>
        <taxon>malvids</taxon>
        <taxon>Brassicales</taxon>
        <taxon>Brassicaceae</taxon>
        <taxon>Camelineae</taxon>
        <taxon>Arabidopsis</taxon>
    </lineage>
</organism>
<keyword id="KW-0150">Chloroplast</keyword>
<keyword id="KW-0934">Plastid</keyword>
<keyword id="KW-1185">Reference proteome</keyword>
<keyword id="KW-0687">Ribonucleoprotein</keyword>
<keyword id="KW-0689">Ribosomal protein</keyword>
<keyword id="KW-0809">Transit peptide</keyword>
<name>RK13_ARATH</name>
<accession>Q9SYL9</accession>
<dbReference type="EMBL" id="X87333">
    <property type="protein sequence ID" value="CAA60775.1"/>
    <property type="molecule type" value="Genomic_DNA"/>
</dbReference>
<dbReference type="EMBL" id="AC007260">
    <property type="protein sequence ID" value="AAD30573.1"/>
    <property type="molecule type" value="Genomic_DNA"/>
</dbReference>
<dbReference type="EMBL" id="CP002684">
    <property type="protein sequence ID" value="AEE36130.1"/>
    <property type="molecule type" value="Genomic_DNA"/>
</dbReference>
<dbReference type="EMBL" id="AY063105">
    <property type="protein sequence ID" value="AAL34279.1"/>
    <property type="molecule type" value="mRNA"/>
</dbReference>
<dbReference type="EMBL" id="AF370318">
    <property type="protein sequence ID" value="AAK44133.1"/>
    <property type="molecule type" value="mRNA"/>
</dbReference>
<dbReference type="PIR" id="A96815">
    <property type="entry name" value="A96815"/>
</dbReference>
<dbReference type="RefSeq" id="NP_177984.1">
    <property type="nucleotide sequence ID" value="NM_106510.3"/>
</dbReference>
<dbReference type="SMR" id="Q9SYL9"/>
<dbReference type="BioGRID" id="29418">
    <property type="interactions" value="7"/>
</dbReference>
<dbReference type="FunCoup" id="Q9SYL9">
    <property type="interactions" value="2162"/>
</dbReference>
<dbReference type="STRING" id="3702.Q9SYL9"/>
<dbReference type="PaxDb" id="3702-AT1G78630.1"/>
<dbReference type="ProteomicsDB" id="226814"/>
<dbReference type="EnsemblPlants" id="AT1G78630.1">
    <property type="protein sequence ID" value="AT1G78630.1"/>
    <property type="gene ID" value="AT1G78630"/>
</dbReference>
<dbReference type="GeneID" id="844199"/>
<dbReference type="Gramene" id="AT1G78630.1">
    <property type="protein sequence ID" value="AT1G78630.1"/>
    <property type="gene ID" value="AT1G78630"/>
</dbReference>
<dbReference type="KEGG" id="ath:AT1G78630"/>
<dbReference type="Araport" id="AT1G78630"/>
<dbReference type="TAIR" id="AT1G78630">
    <property type="gene designation" value="EMB1473"/>
</dbReference>
<dbReference type="eggNOG" id="KOG3203">
    <property type="taxonomic scope" value="Eukaryota"/>
</dbReference>
<dbReference type="HOGENOM" id="CLU_082184_0_0_1"/>
<dbReference type="InParanoid" id="Q9SYL9"/>
<dbReference type="OMA" id="IAIHMRG"/>
<dbReference type="OrthoDB" id="274622at2759"/>
<dbReference type="PhylomeDB" id="Q9SYL9"/>
<dbReference type="PRO" id="PR:Q9SYL9"/>
<dbReference type="Proteomes" id="UP000006548">
    <property type="component" value="Chromosome 1"/>
</dbReference>
<dbReference type="ExpressionAtlas" id="Q9SYL9">
    <property type="expression patterns" value="baseline and differential"/>
</dbReference>
<dbReference type="GO" id="GO:0009507">
    <property type="term" value="C:chloroplast"/>
    <property type="evidence" value="ECO:0007005"/>
    <property type="project" value="TAIR"/>
</dbReference>
<dbReference type="GO" id="GO:0009941">
    <property type="term" value="C:chloroplast envelope"/>
    <property type="evidence" value="ECO:0007005"/>
    <property type="project" value="TAIR"/>
</dbReference>
<dbReference type="GO" id="GO:0009570">
    <property type="term" value="C:chloroplast stroma"/>
    <property type="evidence" value="ECO:0007005"/>
    <property type="project" value="TAIR"/>
</dbReference>
<dbReference type="GO" id="GO:0005739">
    <property type="term" value="C:mitochondrion"/>
    <property type="evidence" value="ECO:0007005"/>
    <property type="project" value="TAIR"/>
</dbReference>
<dbReference type="GO" id="GO:1990904">
    <property type="term" value="C:ribonucleoprotein complex"/>
    <property type="evidence" value="ECO:0007669"/>
    <property type="project" value="UniProtKB-KW"/>
</dbReference>
<dbReference type="GO" id="GO:0005840">
    <property type="term" value="C:ribosome"/>
    <property type="evidence" value="ECO:0007669"/>
    <property type="project" value="UniProtKB-KW"/>
</dbReference>
<dbReference type="GO" id="GO:0009579">
    <property type="term" value="C:thylakoid"/>
    <property type="evidence" value="ECO:0007005"/>
    <property type="project" value="TAIR"/>
</dbReference>
<dbReference type="GO" id="GO:0003729">
    <property type="term" value="F:mRNA binding"/>
    <property type="evidence" value="ECO:0000314"/>
    <property type="project" value="TAIR"/>
</dbReference>
<dbReference type="GO" id="GO:0003735">
    <property type="term" value="F:structural constituent of ribosome"/>
    <property type="evidence" value="ECO:0007669"/>
    <property type="project" value="InterPro"/>
</dbReference>
<dbReference type="GO" id="GO:0006412">
    <property type="term" value="P:translation"/>
    <property type="evidence" value="ECO:0007669"/>
    <property type="project" value="InterPro"/>
</dbReference>
<dbReference type="CDD" id="cd00392">
    <property type="entry name" value="Ribosomal_L13"/>
    <property type="match status" value="1"/>
</dbReference>
<dbReference type="FunFam" id="3.90.1180.10:FF:000001">
    <property type="entry name" value="50S ribosomal protein L13"/>
    <property type="match status" value="1"/>
</dbReference>
<dbReference type="Gene3D" id="3.90.1180.10">
    <property type="entry name" value="Ribosomal protein L13"/>
    <property type="match status" value="1"/>
</dbReference>
<dbReference type="HAMAP" id="MF_01366">
    <property type="entry name" value="Ribosomal_uL13"/>
    <property type="match status" value="1"/>
</dbReference>
<dbReference type="InterPro" id="IPR005822">
    <property type="entry name" value="Ribosomal_uL13"/>
</dbReference>
<dbReference type="InterPro" id="IPR005823">
    <property type="entry name" value="Ribosomal_uL13_bac-type"/>
</dbReference>
<dbReference type="InterPro" id="IPR023563">
    <property type="entry name" value="Ribosomal_uL13_CS"/>
</dbReference>
<dbReference type="InterPro" id="IPR036899">
    <property type="entry name" value="Ribosomal_uL13_sf"/>
</dbReference>
<dbReference type="NCBIfam" id="TIGR01066">
    <property type="entry name" value="rplM_bact"/>
    <property type="match status" value="1"/>
</dbReference>
<dbReference type="PANTHER" id="PTHR11545:SF2">
    <property type="entry name" value="LARGE RIBOSOMAL SUBUNIT PROTEIN UL13M"/>
    <property type="match status" value="1"/>
</dbReference>
<dbReference type="PANTHER" id="PTHR11545">
    <property type="entry name" value="RIBOSOMAL PROTEIN L13"/>
    <property type="match status" value="1"/>
</dbReference>
<dbReference type="Pfam" id="PF00572">
    <property type="entry name" value="Ribosomal_L13"/>
    <property type="match status" value="1"/>
</dbReference>
<dbReference type="SUPFAM" id="SSF52161">
    <property type="entry name" value="Ribosomal protein L13"/>
    <property type="match status" value="1"/>
</dbReference>
<dbReference type="PROSITE" id="PS00783">
    <property type="entry name" value="RIBOSOMAL_L13"/>
    <property type="match status" value="1"/>
</dbReference>
<proteinExistence type="evidence at transcript level"/>